<comment type="function">
    <text evidence="1">Catalyzes the isomerization between 2-isopropylmalate and 3-isopropylmalate, via the formation of 2-isopropylmaleate.</text>
</comment>
<comment type="catalytic activity">
    <reaction evidence="1">
        <text>(2R,3S)-3-isopropylmalate = (2S)-2-isopropylmalate</text>
        <dbReference type="Rhea" id="RHEA:32287"/>
        <dbReference type="ChEBI" id="CHEBI:1178"/>
        <dbReference type="ChEBI" id="CHEBI:35121"/>
        <dbReference type="EC" id="4.2.1.33"/>
    </reaction>
</comment>
<comment type="cofactor">
    <cofactor evidence="1">
        <name>[4Fe-4S] cluster</name>
        <dbReference type="ChEBI" id="CHEBI:49883"/>
    </cofactor>
    <text evidence="1">Binds 1 [4Fe-4S] cluster per subunit.</text>
</comment>
<comment type="pathway">
    <text evidence="1">Amino-acid biosynthesis; L-leucine biosynthesis; L-leucine from 3-methyl-2-oxobutanoate: step 2/4.</text>
</comment>
<comment type="subunit">
    <text evidence="1">Heterodimer of LeuC and LeuD.</text>
</comment>
<comment type="similarity">
    <text evidence="1">Belongs to the aconitase/IPM isomerase family. LeuC type 1 subfamily.</text>
</comment>
<dbReference type="EC" id="4.2.1.33" evidence="1"/>
<dbReference type="EMBL" id="BA000045">
    <property type="protein sequence ID" value="BAC91358.1"/>
    <property type="molecule type" value="Genomic_DNA"/>
</dbReference>
<dbReference type="RefSeq" id="NP_926363.1">
    <property type="nucleotide sequence ID" value="NC_005125.1"/>
</dbReference>
<dbReference type="RefSeq" id="WP_011143406.1">
    <property type="nucleotide sequence ID" value="NC_005125.1"/>
</dbReference>
<dbReference type="SMR" id="Q7NFV7"/>
<dbReference type="FunCoup" id="Q7NFV7">
    <property type="interactions" value="237"/>
</dbReference>
<dbReference type="STRING" id="251221.gene:10760929"/>
<dbReference type="EnsemblBacteria" id="BAC91358">
    <property type="protein sequence ID" value="BAC91358"/>
    <property type="gene ID" value="BAC91358"/>
</dbReference>
<dbReference type="KEGG" id="gvi:glr3417"/>
<dbReference type="PATRIC" id="fig|251221.4.peg.3451"/>
<dbReference type="eggNOG" id="COG0065">
    <property type="taxonomic scope" value="Bacteria"/>
</dbReference>
<dbReference type="HOGENOM" id="CLU_006714_3_4_3"/>
<dbReference type="InParanoid" id="Q7NFV7"/>
<dbReference type="OrthoDB" id="9802769at2"/>
<dbReference type="PhylomeDB" id="Q7NFV7"/>
<dbReference type="UniPathway" id="UPA00048">
    <property type="reaction ID" value="UER00071"/>
</dbReference>
<dbReference type="Proteomes" id="UP000000557">
    <property type="component" value="Chromosome"/>
</dbReference>
<dbReference type="GO" id="GO:0003861">
    <property type="term" value="F:3-isopropylmalate dehydratase activity"/>
    <property type="evidence" value="ECO:0007669"/>
    <property type="project" value="UniProtKB-UniRule"/>
</dbReference>
<dbReference type="GO" id="GO:0051539">
    <property type="term" value="F:4 iron, 4 sulfur cluster binding"/>
    <property type="evidence" value="ECO:0007669"/>
    <property type="project" value="UniProtKB-KW"/>
</dbReference>
<dbReference type="GO" id="GO:0046872">
    <property type="term" value="F:metal ion binding"/>
    <property type="evidence" value="ECO:0007669"/>
    <property type="project" value="UniProtKB-KW"/>
</dbReference>
<dbReference type="GO" id="GO:0009098">
    <property type="term" value="P:L-leucine biosynthetic process"/>
    <property type="evidence" value="ECO:0007669"/>
    <property type="project" value="UniProtKB-UniRule"/>
</dbReference>
<dbReference type="CDD" id="cd01583">
    <property type="entry name" value="IPMI"/>
    <property type="match status" value="1"/>
</dbReference>
<dbReference type="Gene3D" id="3.30.499.10">
    <property type="entry name" value="Aconitase, domain 3"/>
    <property type="match status" value="2"/>
</dbReference>
<dbReference type="HAMAP" id="MF_01026">
    <property type="entry name" value="LeuC_type1"/>
    <property type="match status" value="1"/>
</dbReference>
<dbReference type="InterPro" id="IPR004430">
    <property type="entry name" value="3-IsopropMal_deHydase_lsu"/>
</dbReference>
<dbReference type="InterPro" id="IPR015931">
    <property type="entry name" value="Acnase/IPM_dHydase_lsu_aba_1/3"/>
</dbReference>
<dbReference type="InterPro" id="IPR001030">
    <property type="entry name" value="Acoase/IPM_deHydtase_lsu_aba"/>
</dbReference>
<dbReference type="InterPro" id="IPR018136">
    <property type="entry name" value="Aconitase_4Fe-4S_BS"/>
</dbReference>
<dbReference type="InterPro" id="IPR036008">
    <property type="entry name" value="Aconitase_4Fe-4S_dom"/>
</dbReference>
<dbReference type="InterPro" id="IPR050067">
    <property type="entry name" value="IPM_dehydratase_rel_enz"/>
</dbReference>
<dbReference type="InterPro" id="IPR033941">
    <property type="entry name" value="IPMI_cat"/>
</dbReference>
<dbReference type="NCBIfam" id="TIGR00170">
    <property type="entry name" value="leuC"/>
    <property type="match status" value="1"/>
</dbReference>
<dbReference type="NCBIfam" id="NF004016">
    <property type="entry name" value="PRK05478.1"/>
    <property type="match status" value="1"/>
</dbReference>
<dbReference type="NCBIfam" id="NF009116">
    <property type="entry name" value="PRK12466.1"/>
    <property type="match status" value="1"/>
</dbReference>
<dbReference type="PANTHER" id="PTHR43822:SF9">
    <property type="entry name" value="3-ISOPROPYLMALATE DEHYDRATASE"/>
    <property type="match status" value="1"/>
</dbReference>
<dbReference type="PANTHER" id="PTHR43822">
    <property type="entry name" value="HOMOACONITASE, MITOCHONDRIAL-RELATED"/>
    <property type="match status" value="1"/>
</dbReference>
<dbReference type="Pfam" id="PF00330">
    <property type="entry name" value="Aconitase"/>
    <property type="match status" value="1"/>
</dbReference>
<dbReference type="PRINTS" id="PR00415">
    <property type="entry name" value="ACONITASE"/>
</dbReference>
<dbReference type="SUPFAM" id="SSF53732">
    <property type="entry name" value="Aconitase iron-sulfur domain"/>
    <property type="match status" value="1"/>
</dbReference>
<dbReference type="PROSITE" id="PS00450">
    <property type="entry name" value="ACONITASE_1"/>
    <property type="match status" value="1"/>
</dbReference>
<dbReference type="PROSITE" id="PS01244">
    <property type="entry name" value="ACONITASE_2"/>
    <property type="match status" value="1"/>
</dbReference>
<feature type="chain" id="PRO_0000076749" description="3-isopropylmalate dehydratase large subunit">
    <location>
        <begin position="1"/>
        <end position="473"/>
    </location>
</feature>
<feature type="binding site" evidence="1">
    <location>
        <position position="349"/>
    </location>
    <ligand>
        <name>[4Fe-4S] cluster</name>
        <dbReference type="ChEBI" id="CHEBI:49883"/>
    </ligand>
</feature>
<feature type="binding site" evidence="1">
    <location>
        <position position="409"/>
    </location>
    <ligand>
        <name>[4Fe-4S] cluster</name>
        <dbReference type="ChEBI" id="CHEBI:49883"/>
    </ligand>
</feature>
<feature type="binding site" evidence="1">
    <location>
        <position position="412"/>
    </location>
    <ligand>
        <name>[4Fe-4S] cluster</name>
        <dbReference type="ChEBI" id="CHEBI:49883"/>
    </ligand>
</feature>
<proteinExistence type="inferred from homology"/>
<gene>
    <name evidence="1" type="primary">leuC</name>
    <name type="ordered locus">glr3417</name>
</gene>
<sequence length="473" mass="51116">MAVSRATLFDKVWDLHTVGTLASGQTQLFIGLHLIHEVTSPQAFAMLRERGLGVLYAERTVATVDHIVPTQSQQRPFADTLAEQMIRALEDNCAEFGIRFYNIGSGSQGIVHVIAPEQGFTQPGMTIACGDSHTATHGAFGAIAFGIGTSQVRDVLATQTLALDKLKVRRIEMNGSLHPGVFAKDVILHIIRKLGVKAGVGYAYEFAGTTFEAMNMEERMTVCNMAIEGGARCGYINPDAVTYAYLKGRDFAPQGADWERAVAWWENLRSDPDAQYDDTIHFDAAEIAPTVTWGITPGQGIAVDEIVPRPEELPGEDRPLAEEAYRYMDLAPGVPIVGTKVDVCFIGSCTNGRLSDLREAANLARGRHVAPGVKAFVVPGSERVKRQAEAEGLHEVFLEAGFEWREPGCSMCLAMNPDRLEGRQLSASSSNRNFKGRQGSASGRTLLMSPAMVVAAAVSGAVADVRALLEPTP</sequence>
<accession>Q7NFV7</accession>
<organism>
    <name type="scientific">Gloeobacter violaceus (strain ATCC 29082 / PCC 7421)</name>
    <dbReference type="NCBI Taxonomy" id="251221"/>
    <lineage>
        <taxon>Bacteria</taxon>
        <taxon>Bacillati</taxon>
        <taxon>Cyanobacteriota</taxon>
        <taxon>Cyanophyceae</taxon>
        <taxon>Gloeobacterales</taxon>
        <taxon>Gloeobacteraceae</taxon>
        <taxon>Gloeobacter</taxon>
    </lineage>
</organism>
<name>LEUC_GLOVI</name>
<evidence type="ECO:0000255" key="1">
    <source>
        <dbReference type="HAMAP-Rule" id="MF_01026"/>
    </source>
</evidence>
<protein>
    <recommendedName>
        <fullName evidence="1">3-isopropylmalate dehydratase large subunit</fullName>
        <ecNumber evidence="1">4.2.1.33</ecNumber>
    </recommendedName>
    <alternativeName>
        <fullName evidence="1">Alpha-IPM isomerase</fullName>
        <shortName evidence="1">IPMI</shortName>
    </alternativeName>
    <alternativeName>
        <fullName evidence="1">Isopropylmalate isomerase</fullName>
    </alternativeName>
</protein>
<reference key="1">
    <citation type="journal article" date="2003" name="DNA Res.">
        <title>Complete genome structure of Gloeobacter violaceus PCC 7421, a cyanobacterium that lacks thylakoids.</title>
        <authorList>
            <person name="Nakamura Y."/>
            <person name="Kaneko T."/>
            <person name="Sato S."/>
            <person name="Mimuro M."/>
            <person name="Miyashita H."/>
            <person name="Tsuchiya T."/>
            <person name="Sasamoto S."/>
            <person name="Watanabe A."/>
            <person name="Kawashima K."/>
            <person name="Kishida Y."/>
            <person name="Kiyokawa C."/>
            <person name="Kohara M."/>
            <person name="Matsumoto M."/>
            <person name="Matsuno A."/>
            <person name="Nakazaki N."/>
            <person name="Shimpo S."/>
            <person name="Takeuchi C."/>
            <person name="Yamada M."/>
            <person name="Tabata S."/>
        </authorList>
    </citation>
    <scope>NUCLEOTIDE SEQUENCE [LARGE SCALE GENOMIC DNA]</scope>
    <source>
        <strain>ATCC 29082 / PCC 7421</strain>
    </source>
</reference>
<keyword id="KW-0004">4Fe-4S</keyword>
<keyword id="KW-0028">Amino-acid biosynthesis</keyword>
<keyword id="KW-0100">Branched-chain amino acid biosynthesis</keyword>
<keyword id="KW-0408">Iron</keyword>
<keyword id="KW-0411">Iron-sulfur</keyword>
<keyword id="KW-0432">Leucine biosynthesis</keyword>
<keyword id="KW-0456">Lyase</keyword>
<keyword id="KW-0479">Metal-binding</keyword>
<keyword id="KW-1185">Reference proteome</keyword>